<evidence type="ECO:0000255" key="1">
    <source>
        <dbReference type="HAMAP-Rule" id="MF_00082"/>
    </source>
</evidence>
<dbReference type="EC" id="2.7.2.8" evidence="1"/>
<dbReference type="EMBL" id="CP000284">
    <property type="protein sequence ID" value="ABE50522.1"/>
    <property type="molecule type" value="Genomic_DNA"/>
</dbReference>
<dbReference type="RefSeq" id="WP_011480476.1">
    <property type="nucleotide sequence ID" value="NC_007947.1"/>
</dbReference>
<dbReference type="SMR" id="Q1GZ15"/>
<dbReference type="STRING" id="265072.Mfla_2255"/>
<dbReference type="KEGG" id="mfa:Mfla_2255"/>
<dbReference type="eggNOG" id="COG0548">
    <property type="taxonomic scope" value="Bacteria"/>
</dbReference>
<dbReference type="HOGENOM" id="CLU_053680_0_0_4"/>
<dbReference type="OrthoDB" id="9803155at2"/>
<dbReference type="UniPathway" id="UPA00068">
    <property type="reaction ID" value="UER00107"/>
</dbReference>
<dbReference type="Proteomes" id="UP000002440">
    <property type="component" value="Chromosome"/>
</dbReference>
<dbReference type="GO" id="GO:0005737">
    <property type="term" value="C:cytoplasm"/>
    <property type="evidence" value="ECO:0007669"/>
    <property type="project" value="UniProtKB-SubCell"/>
</dbReference>
<dbReference type="GO" id="GO:0003991">
    <property type="term" value="F:acetylglutamate kinase activity"/>
    <property type="evidence" value="ECO:0007669"/>
    <property type="project" value="UniProtKB-UniRule"/>
</dbReference>
<dbReference type="GO" id="GO:0005524">
    <property type="term" value="F:ATP binding"/>
    <property type="evidence" value="ECO:0007669"/>
    <property type="project" value="UniProtKB-UniRule"/>
</dbReference>
<dbReference type="GO" id="GO:0042450">
    <property type="term" value="P:arginine biosynthetic process via ornithine"/>
    <property type="evidence" value="ECO:0007669"/>
    <property type="project" value="UniProtKB-UniRule"/>
</dbReference>
<dbReference type="GO" id="GO:0006526">
    <property type="term" value="P:L-arginine biosynthetic process"/>
    <property type="evidence" value="ECO:0007669"/>
    <property type="project" value="UniProtKB-UniPathway"/>
</dbReference>
<dbReference type="CDD" id="cd04250">
    <property type="entry name" value="AAK_NAGK-C"/>
    <property type="match status" value="1"/>
</dbReference>
<dbReference type="FunFam" id="3.40.1160.10:FF:000004">
    <property type="entry name" value="Acetylglutamate kinase"/>
    <property type="match status" value="1"/>
</dbReference>
<dbReference type="Gene3D" id="3.40.1160.10">
    <property type="entry name" value="Acetylglutamate kinase-like"/>
    <property type="match status" value="1"/>
</dbReference>
<dbReference type="HAMAP" id="MF_00082">
    <property type="entry name" value="ArgB"/>
    <property type="match status" value="1"/>
</dbReference>
<dbReference type="InterPro" id="IPR036393">
    <property type="entry name" value="AceGlu_kinase-like_sf"/>
</dbReference>
<dbReference type="InterPro" id="IPR004662">
    <property type="entry name" value="AcgluKinase_fam"/>
</dbReference>
<dbReference type="InterPro" id="IPR037528">
    <property type="entry name" value="ArgB"/>
</dbReference>
<dbReference type="InterPro" id="IPR001048">
    <property type="entry name" value="Asp/Glu/Uridylate_kinase"/>
</dbReference>
<dbReference type="InterPro" id="IPR001057">
    <property type="entry name" value="Glu/AcGlu_kinase"/>
</dbReference>
<dbReference type="InterPro" id="IPR041727">
    <property type="entry name" value="NAGK-C"/>
</dbReference>
<dbReference type="NCBIfam" id="TIGR00761">
    <property type="entry name" value="argB"/>
    <property type="match status" value="1"/>
</dbReference>
<dbReference type="PANTHER" id="PTHR23342">
    <property type="entry name" value="N-ACETYLGLUTAMATE SYNTHASE"/>
    <property type="match status" value="1"/>
</dbReference>
<dbReference type="PANTHER" id="PTHR23342:SF0">
    <property type="entry name" value="N-ACETYLGLUTAMATE SYNTHASE, MITOCHONDRIAL"/>
    <property type="match status" value="1"/>
</dbReference>
<dbReference type="Pfam" id="PF00696">
    <property type="entry name" value="AA_kinase"/>
    <property type="match status" value="1"/>
</dbReference>
<dbReference type="PIRSF" id="PIRSF000728">
    <property type="entry name" value="NAGK"/>
    <property type="match status" value="1"/>
</dbReference>
<dbReference type="PRINTS" id="PR00474">
    <property type="entry name" value="GLU5KINASE"/>
</dbReference>
<dbReference type="SUPFAM" id="SSF53633">
    <property type="entry name" value="Carbamate kinase-like"/>
    <property type="match status" value="1"/>
</dbReference>
<accession>Q1GZ15</accession>
<protein>
    <recommendedName>
        <fullName evidence="1">Acetylglutamate kinase</fullName>
        <ecNumber evidence="1">2.7.2.8</ecNumber>
    </recommendedName>
    <alternativeName>
        <fullName evidence="1">N-acetyl-L-glutamate 5-phosphotransferase</fullName>
    </alternativeName>
    <alternativeName>
        <fullName evidence="1">NAG kinase</fullName>
        <shortName evidence="1">NAGK</shortName>
    </alternativeName>
</protein>
<keyword id="KW-0028">Amino-acid biosynthesis</keyword>
<keyword id="KW-0055">Arginine biosynthesis</keyword>
<keyword id="KW-0067">ATP-binding</keyword>
<keyword id="KW-0963">Cytoplasm</keyword>
<keyword id="KW-0418">Kinase</keyword>
<keyword id="KW-0547">Nucleotide-binding</keyword>
<keyword id="KW-1185">Reference proteome</keyword>
<keyword id="KW-0808">Transferase</keyword>
<organism>
    <name type="scientific">Methylobacillus flagellatus (strain ATCC 51484 / DSM 6875 / VKM B-1610 / KT)</name>
    <dbReference type="NCBI Taxonomy" id="265072"/>
    <lineage>
        <taxon>Bacteria</taxon>
        <taxon>Pseudomonadati</taxon>
        <taxon>Pseudomonadota</taxon>
        <taxon>Betaproteobacteria</taxon>
        <taxon>Nitrosomonadales</taxon>
        <taxon>Methylophilaceae</taxon>
        <taxon>Methylobacillus</taxon>
    </lineage>
</organism>
<comment type="function">
    <text evidence="1">Catalyzes the ATP-dependent phosphorylation of N-acetyl-L-glutamate.</text>
</comment>
<comment type="catalytic activity">
    <reaction evidence="1">
        <text>N-acetyl-L-glutamate + ATP = N-acetyl-L-glutamyl 5-phosphate + ADP</text>
        <dbReference type="Rhea" id="RHEA:14629"/>
        <dbReference type="ChEBI" id="CHEBI:30616"/>
        <dbReference type="ChEBI" id="CHEBI:44337"/>
        <dbReference type="ChEBI" id="CHEBI:57936"/>
        <dbReference type="ChEBI" id="CHEBI:456216"/>
        <dbReference type="EC" id="2.7.2.8"/>
    </reaction>
</comment>
<comment type="pathway">
    <text evidence="1">Amino-acid biosynthesis; L-arginine biosynthesis; N(2)-acetyl-L-ornithine from L-glutamate: step 2/4.</text>
</comment>
<comment type="subcellular location">
    <subcellularLocation>
        <location evidence="1">Cytoplasm</location>
    </subcellularLocation>
</comment>
<comment type="similarity">
    <text evidence="1">Belongs to the acetylglutamate kinase family. ArgB subfamily.</text>
</comment>
<gene>
    <name evidence="1" type="primary">argB</name>
    <name type="ordered locus">Mfla_2255</name>
</gene>
<proteinExistence type="inferred from homology"/>
<feature type="chain" id="PRO_0000264718" description="Acetylglutamate kinase">
    <location>
        <begin position="1"/>
        <end position="294"/>
    </location>
</feature>
<feature type="binding site" evidence="1">
    <location>
        <begin position="67"/>
        <end position="68"/>
    </location>
    <ligand>
        <name>substrate</name>
    </ligand>
</feature>
<feature type="binding site" evidence="1">
    <location>
        <position position="89"/>
    </location>
    <ligand>
        <name>substrate</name>
    </ligand>
</feature>
<feature type="binding site" evidence="1">
    <location>
        <position position="191"/>
    </location>
    <ligand>
        <name>substrate</name>
    </ligand>
</feature>
<feature type="site" description="Transition state stabilizer" evidence="1">
    <location>
        <position position="32"/>
    </location>
</feature>
<feature type="site" description="Transition state stabilizer" evidence="1">
    <location>
        <position position="251"/>
    </location>
</feature>
<sequence length="294" mass="31063">MLNQTTAAQKAQTLAEALPYIKRFFDKTIVIKYGGNAMTDPHLKECFASDVVLLKLVGMNPVVVHGGGPQINELLDKLGKKGEFIQGMRVTDEETMDIVEMVLGGQVNKEIVNLINRNGGKAVGLTGQDGNFIHARKLLVQDLQNPSNMIDIGQVGEISGIDPSLIQFLDSGDFIPVIAPIGVGIDGQTYNINADVVAGKLAEVLGAEKLILLTNTPGVLDKTGQLLTGLTPKQIDDLVADGTLSGGMLPKISSALDAARSGVKSVHIIDGRVEHALLLEVLTDAGVGTLITAK</sequence>
<reference key="1">
    <citation type="submission" date="2006-03" db="EMBL/GenBank/DDBJ databases">
        <title>Complete sequence of Methylobacillus flagellatus KT.</title>
        <authorList>
            <consortium name="US DOE Joint Genome Institute"/>
            <person name="Copeland A."/>
            <person name="Lucas S."/>
            <person name="Lapidus A."/>
            <person name="Barry K."/>
            <person name="Detter J.C."/>
            <person name="Glavina del Rio T."/>
            <person name="Hammon N."/>
            <person name="Israni S."/>
            <person name="Dalin E."/>
            <person name="Tice H."/>
            <person name="Pitluck S."/>
            <person name="Brettin T."/>
            <person name="Bruce D."/>
            <person name="Han C."/>
            <person name="Tapia R."/>
            <person name="Saunders E."/>
            <person name="Gilna P."/>
            <person name="Schmutz J."/>
            <person name="Larimer F."/>
            <person name="Land M."/>
            <person name="Kyrpides N."/>
            <person name="Anderson I."/>
            <person name="Richardson P."/>
        </authorList>
    </citation>
    <scope>NUCLEOTIDE SEQUENCE [LARGE SCALE GENOMIC DNA]</scope>
    <source>
        <strain>ATCC 51484 / DSM 6875 / VKM B-1610 / KT</strain>
    </source>
</reference>
<name>ARGB_METFK</name>